<comment type="function">
    <text evidence="1">Component of the nascent polypeptide-associated complex (NAC), a dynamic component of the ribosomal exit tunnel, protecting the emerging polypeptides from interaction with other cytoplasmic proteins to ensure appropriate nascent protein targeting. The NAC complex also promotes mitochondrial protein import by enhancing productive ribosome interactions with the outer mitochondrial membrane and blocks the inappropriate interaction of ribosomes translating non-secretory nascent polypeptides with translocation sites in the membrane of the endoplasmic reticulum. EGD1 may act as a transcription factor that exert a negative effect on the expression of several genes that are transcribed by RNA polymerase II.</text>
</comment>
<comment type="subunit">
    <text evidence="1">Part of the nascent polypeptide-associated complex (NAC), consisting of EGD2 and EGD1. NAC associates with ribosomes via EGD1 (By similarity).</text>
</comment>
<comment type="subcellular location">
    <subcellularLocation>
        <location evidence="1">Cytoplasm</location>
    </subcellularLocation>
    <subcellularLocation>
        <location evidence="1">Nucleus</location>
    </subcellularLocation>
    <text evidence="1">Predominantly cytoplasmic, may also transiently localize to the nucleus.</text>
</comment>
<comment type="similarity">
    <text evidence="4">Belongs to the NAC-beta family.</text>
</comment>
<feature type="chain" id="PRO_0000310165" description="Nascent polypeptide-associated complex subunit beta">
    <location>
        <begin position="1"/>
        <end position="158"/>
    </location>
</feature>
<feature type="domain" description="NAC-A/B" evidence="2">
    <location>
        <begin position="34"/>
        <end position="99"/>
    </location>
</feature>
<feature type="region of interest" description="Disordered" evidence="3">
    <location>
        <begin position="1"/>
        <end position="40"/>
    </location>
</feature>
<feature type="region of interest" description="Disordered" evidence="3">
    <location>
        <begin position="119"/>
        <end position="158"/>
    </location>
</feature>
<feature type="compositionally biased region" description="Basic residues" evidence="3">
    <location>
        <begin position="16"/>
        <end position="31"/>
    </location>
</feature>
<feature type="compositionally biased region" description="Acidic residues" evidence="3">
    <location>
        <begin position="137"/>
        <end position="152"/>
    </location>
</feature>
<keyword id="KW-0963">Cytoplasm</keyword>
<keyword id="KW-0539">Nucleus</keyword>
<keyword id="KW-0653">Protein transport</keyword>
<keyword id="KW-1185">Reference proteome</keyword>
<keyword id="KW-0678">Repressor</keyword>
<keyword id="KW-0804">Transcription</keyword>
<keyword id="KW-0805">Transcription regulation</keyword>
<keyword id="KW-0813">Transport</keyword>
<proteinExistence type="inferred from homology"/>
<reference key="1">
    <citation type="journal article" date="2009" name="Genome Res.">
        <title>Comparative genomic analyses of the human fungal pathogens Coccidioides and their relatives.</title>
        <authorList>
            <person name="Sharpton T.J."/>
            <person name="Stajich J.E."/>
            <person name="Rounsley S.D."/>
            <person name="Gardner M.J."/>
            <person name="Wortman J.R."/>
            <person name="Jordar V.S."/>
            <person name="Maiti R."/>
            <person name="Kodira C.D."/>
            <person name="Neafsey D.E."/>
            <person name="Zeng Q."/>
            <person name="Hung C.-Y."/>
            <person name="McMahan C."/>
            <person name="Muszewska A."/>
            <person name="Grynberg M."/>
            <person name="Mandel M.A."/>
            <person name="Kellner E.M."/>
            <person name="Barker B.M."/>
            <person name="Galgiani J.N."/>
            <person name="Orbach M.J."/>
            <person name="Kirkland T.N."/>
            <person name="Cole G.T."/>
            <person name="Henn M.R."/>
            <person name="Birren B.W."/>
            <person name="Taylor J.W."/>
        </authorList>
    </citation>
    <scope>NUCLEOTIDE SEQUENCE [LARGE SCALE GENOMIC DNA]</scope>
    <source>
        <strain>NAm1 / WU24</strain>
    </source>
</reference>
<sequence>MDQAKLARLQQSVRIGKGKGTPRRKTKKVHKSSGTDDKKLQTSLKKLNVQPIQAIEEVNMFKEDGNVIHFAAPKVHASVPSNTFAIYGNGEDKELTELVPGILNQLGPDSLASLRKLAESYQSMQKGEGGEDAKKDDDDDDDEIPDLVEGENFESKVE</sequence>
<protein>
    <recommendedName>
        <fullName>Nascent polypeptide-associated complex subunit beta</fullName>
        <shortName>NAC-beta</shortName>
    </recommendedName>
    <alternativeName>
        <fullName>Beta-NAC</fullName>
    </alternativeName>
</protein>
<name>NACB_AJECN</name>
<evidence type="ECO:0000250" key="1"/>
<evidence type="ECO:0000255" key="2">
    <source>
        <dbReference type="PROSITE-ProRule" id="PRU00507"/>
    </source>
</evidence>
<evidence type="ECO:0000256" key="3">
    <source>
        <dbReference type="SAM" id="MobiDB-lite"/>
    </source>
</evidence>
<evidence type="ECO:0000305" key="4"/>
<accession>A6R5Z3</accession>
<dbReference type="EMBL" id="CH476659">
    <property type="protein sequence ID" value="EDN08552.1"/>
    <property type="molecule type" value="Genomic_DNA"/>
</dbReference>
<dbReference type="SMR" id="A6R5Z3"/>
<dbReference type="STRING" id="339724.A6R5Z3"/>
<dbReference type="KEGG" id="aje:HCAG_05051"/>
<dbReference type="VEuPathDB" id="FungiDB:HCAG_05051"/>
<dbReference type="HOGENOM" id="CLU_098726_2_0_1"/>
<dbReference type="OMA" id="RMQQSVR"/>
<dbReference type="OrthoDB" id="7784at299071"/>
<dbReference type="Proteomes" id="UP000009297">
    <property type="component" value="Unassembled WGS sequence"/>
</dbReference>
<dbReference type="GO" id="GO:0005737">
    <property type="term" value="C:cytoplasm"/>
    <property type="evidence" value="ECO:0007669"/>
    <property type="project" value="UniProtKB-SubCell"/>
</dbReference>
<dbReference type="GO" id="GO:0005634">
    <property type="term" value="C:nucleus"/>
    <property type="evidence" value="ECO:0007669"/>
    <property type="project" value="UniProtKB-SubCell"/>
</dbReference>
<dbReference type="GO" id="GO:0015031">
    <property type="term" value="P:protein transport"/>
    <property type="evidence" value="ECO:0007669"/>
    <property type="project" value="UniProtKB-KW"/>
</dbReference>
<dbReference type="CDD" id="cd22055">
    <property type="entry name" value="NAC_BTF3"/>
    <property type="match status" value="1"/>
</dbReference>
<dbReference type="FunFam" id="2.20.70.30:FF:000003">
    <property type="entry name" value="Nascent polypeptide-associated complex subunit beta"/>
    <property type="match status" value="1"/>
</dbReference>
<dbReference type="Gene3D" id="2.20.70.30">
    <property type="entry name" value="Nascent polypeptide-associated complex domain"/>
    <property type="match status" value="1"/>
</dbReference>
<dbReference type="InterPro" id="IPR039370">
    <property type="entry name" value="BTF3"/>
</dbReference>
<dbReference type="InterPro" id="IPR038187">
    <property type="entry name" value="NAC_A/B_dom_sf"/>
</dbReference>
<dbReference type="InterPro" id="IPR002715">
    <property type="entry name" value="Nas_poly-pep-assoc_cplx_dom"/>
</dbReference>
<dbReference type="PANTHER" id="PTHR10351">
    <property type="entry name" value="TRANSCRIPTION FACTOR BTF3 FAMILY MEMBER"/>
    <property type="match status" value="1"/>
</dbReference>
<dbReference type="Pfam" id="PF01849">
    <property type="entry name" value="NAC"/>
    <property type="match status" value="1"/>
</dbReference>
<dbReference type="SMART" id="SM01407">
    <property type="entry name" value="NAC"/>
    <property type="match status" value="1"/>
</dbReference>
<dbReference type="PROSITE" id="PS51151">
    <property type="entry name" value="NAC_AB"/>
    <property type="match status" value="1"/>
</dbReference>
<gene>
    <name type="primary">EGD1</name>
    <name type="ORF">HCAG_05051</name>
</gene>
<organism>
    <name type="scientific">Ajellomyces capsulatus (strain NAm1 / WU24)</name>
    <name type="common">Darling's disease fungus</name>
    <name type="synonym">Histoplasma capsulatum</name>
    <dbReference type="NCBI Taxonomy" id="2059318"/>
    <lineage>
        <taxon>Eukaryota</taxon>
        <taxon>Fungi</taxon>
        <taxon>Dikarya</taxon>
        <taxon>Ascomycota</taxon>
        <taxon>Pezizomycotina</taxon>
        <taxon>Eurotiomycetes</taxon>
        <taxon>Eurotiomycetidae</taxon>
        <taxon>Onygenales</taxon>
        <taxon>Ajellomycetaceae</taxon>
        <taxon>Histoplasma</taxon>
    </lineage>
</organism>